<reference key="1">
    <citation type="journal article" date="1997" name="Endocrinology">
        <title>A novel estrogen-enhanced transcript identified in the rat uterus by differential display.</title>
        <authorList>
            <person name="Everett L.M."/>
            <person name="Li A."/>
            <person name="Devaraju G."/>
            <person name="Caperell-Grant A."/>
            <person name="Bigsby R.M."/>
        </authorList>
    </citation>
    <scope>NUCLEOTIDE SEQUENCE [MRNA]</scope>
    <scope>INDUCTION</scope>
    <scope>TISSUE SPECIFICITY</scope>
    <source>
        <tissue>Uterus</tissue>
    </source>
</reference>
<sequence>MSAPGPYQAAAGPSVMPTAPPTYEETVGVNSYYPTPPAPQPGPATGLITGPDGKGMNPPSYYTQPVPVPNANAIAVQTVYVQQPISFYDRPIQMCCPSCNKMIVTQLSYNAGALTWLSCGSLCLLGCVAGCCFIPFCVDALQDVDHYCPNCKALLGTYKRL</sequence>
<accession>P0C0T0</accession>
<name>LITAF_RAT</name>
<proteinExistence type="evidence at transcript level"/>
<feature type="chain" id="PRO_0000084442" description="Lipopolysaccharide-induced tumor necrosis factor-alpha factor homolog">
    <location>
        <begin position="1"/>
        <end position="161"/>
    </location>
</feature>
<feature type="domain" description="LITAF" evidence="3">
    <location>
        <begin position="76"/>
        <end position="160"/>
    </location>
</feature>
<feature type="region of interest" description="Membrane-binding amphipathic helix" evidence="5">
    <location>
        <begin position="111"/>
        <end position="134"/>
    </location>
</feature>
<feature type="short sequence motif" description="PPxY motif" evidence="1">
    <location>
        <begin position="20"/>
        <end position="23"/>
    </location>
</feature>
<feature type="binding site" evidence="1">
    <location>
        <position position="96"/>
    </location>
    <ligand>
        <name>Zn(2+)</name>
        <dbReference type="ChEBI" id="CHEBI:29105"/>
    </ligand>
</feature>
<feature type="binding site" evidence="1">
    <location>
        <position position="99"/>
    </location>
    <ligand>
        <name>Zn(2+)</name>
        <dbReference type="ChEBI" id="CHEBI:29105"/>
    </ligand>
</feature>
<feature type="binding site" evidence="1">
    <location>
        <position position="148"/>
    </location>
    <ligand>
        <name>Zn(2+)</name>
        <dbReference type="ChEBI" id="CHEBI:29105"/>
    </ligand>
</feature>
<feature type="binding site" evidence="1">
    <location>
        <position position="151"/>
    </location>
    <ligand>
        <name>Zn(2+)</name>
        <dbReference type="ChEBI" id="CHEBI:29105"/>
    </ligand>
</feature>
<gene>
    <name type="primary">Litaf</name>
</gene>
<protein>
    <recommendedName>
        <fullName>Lipopolysaccharide-induced tumor necrosis factor-alpha factor homolog</fullName>
        <shortName>LPS-induced TNF-alpha factor homolog</shortName>
    </recommendedName>
    <alternativeName>
        <fullName>Estrogen-enhanced transcript protein 1</fullName>
        <shortName>Eet-1</shortName>
    </alternativeName>
</protein>
<organism>
    <name type="scientific">Rattus norvegicus</name>
    <name type="common">Rat</name>
    <dbReference type="NCBI Taxonomy" id="10116"/>
    <lineage>
        <taxon>Eukaryota</taxon>
        <taxon>Metazoa</taxon>
        <taxon>Chordata</taxon>
        <taxon>Craniata</taxon>
        <taxon>Vertebrata</taxon>
        <taxon>Euteleostomi</taxon>
        <taxon>Mammalia</taxon>
        <taxon>Eutheria</taxon>
        <taxon>Euarchontoglires</taxon>
        <taxon>Glires</taxon>
        <taxon>Rodentia</taxon>
        <taxon>Myomorpha</taxon>
        <taxon>Muroidea</taxon>
        <taxon>Muridae</taxon>
        <taxon>Murinae</taxon>
        <taxon>Rattus</taxon>
    </lineage>
</organism>
<comment type="function">
    <text evidence="1">Plays a role in endosomal protein trafficking and in targeting proteins for lysosomal degradation. Plays a role in targeting endocytosed EGFR and ERGG3 for lysosomal degradation, and thereby helps down-regulate downstream signaling cascades. Helps recruit the ESCRT complex components TSG101, HGS and STAM to cytoplasmic membranes. Probably plays a role in regulating protein degradation via its interaction with NEDD4. May also contribute to the regulation of gene expression in the nucleus. Binds DNA (in vitro) and may play a synergistic role with STAT6 in the nucleus in regulating the expression of various cytokines. May regulate the expression of numerous cytokines, such as TNF, CCL2, CCL5, CXCL1, IL1A and IL10.</text>
</comment>
<comment type="subunit">
    <text evidence="1">Monomer. Interacts with NEDD4. Interacts (via PSAP motif) with TSG101, a component of the ESCRT-I complex (endosomal sorting complex required for transport I). Interacts with WWOX. Interacts with STAM, a component of the ESCRT-0 complex; the interaction is direct. Identified in a complex with STAM and HGS; within this complex, interacts directly with STAM, but not with HGS. Interacts with STAT6.</text>
</comment>
<comment type="subcellular location">
    <subcellularLocation>
        <location evidence="1">Cytoplasm</location>
    </subcellularLocation>
    <subcellularLocation>
        <location evidence="1">Nucleus</location>
    </subcellularLocation>
    <subcellularLocation>
        <location evidence="1">Lysosome membrane</location>
        <topology evidence="1">Peripheral membrane protein</topology>
        <orientation evidence="1">Cytoplasmic side</orientation>
    </subcellularLocation>
    <subcellularLocation>
        <location evidence="1">Early endosome membrane</location>
    </subcellularLocation>
    <subcellularLocation>
        <location evidence="1">Late endosome membrane</location>
    </subcellularLocation>
    <subcellularLocation>
        <location evidence="1">Endosome membrane</location>
        <topology evidence="1">Peripheral membrane protein</topology>
        <orientation evidence="1">Cytoplasmic side</orientation>
    </subcellularLocation>
    <subcellularLocation>
        <location evidence="1">Cell membrane</location>
        <topology evidence="1">Peripheral membrane protein</topology>
        <orientation evidence="1">Cytoplasmic side</orientation>
    </subcellularLocation>
    <subcellularLocation>
        <location evidence="1">Golgi apparatus membrane</location>
    </subcellularLocation>
    <text evidence="1 2">Associated with membranes of lysosomes, early and late endosomes. Can translocate from the cytoplasm into the nucleus (By similarity). Detected at Schmidt-Lanterman incisures and in nodal regions of myelinating Schwann cells (By similarity).</text>
</comment>
<comment type="tissue specificity">
    <text evidence="4">Widely expressed.</text>
</comment>
<comment type="induction">
    <text evidence="4">By estrogen in vagina, cervix, uterus and kidney.</text>
</comment>
<comment type="domain">
    <text evidence="1">The PPxY motif mediates interaction with WWOX and NEDD4.</text>
</comment>
<comment type="domain">
    <text evidence="1">The LITAF domain is stabilized by a bound zinc ion. The LITAF domain contains an amphipathic helix that mediates interaction with lipid membranes. It interacts specifically with phosphatidylethanolamine lipid headgroups, but not with phosphoglycerol, phosphocholine, phosphoserine or inositolhexakisphosphate.</text>
</comment>
<comment type="PTM">
    <text evidence="1">Phosphorylated on tyrosine residues in response to EGF.</text>
</comment>
<comment type="similarity">
    <text evidence="5">Belongs to the CDIP1/LITAF family.</text>
</comment>
<keyword id="KW-1003">Cell membrane</keyword>
<keyword id="KW-0963">Cytoplasm</keyword>
<keyword id="KW-0238">DNA-binding</keyword>
<keyword id="KW-0967">Endosome</keyword>
<keyword id="KW-0333">Golgi apparatus</keyword>
<keyword id="KW-0458">Lysosome</keyword>
<keyword id="KW-0472">Membrane</keyword>
<keyword id="KW-0479">Metal-binding</keyword>
<keyword id="KW-0539">Nucleus</keyword>
<keyword id="KW-1185">Reference proteome</keyword>
<keyword id="KW-0804">Transcription</keyword>
<keyword id="KW-0805">Transcription regulation</keyword>
<keyword id="KW-0862">Zinc</keyword>
<dbReference type="EMBL" id="U53184">
    <property type="status" value="NOT_ANNOTATED_CDS"/>
    <property type="molecule type" value="mRNA"/>
</dbReference>
<dbReference type="RefSeq" id="NP_001099205.1">
    <property type="nucleotide sequence ID" value="NM_001105735.3"/>
</dbReference>
<dbReference type="RefSeq" id="XP_038942734.1">
    <property type="nucleotide sequence ID" value="XM_039086806.2"/>
</dbReference>
<dbReference type="RefSeq" id="XP_063125895.1">
    <property type="nucleotide sequence ID" value="XM_063269825.1"/>
</dbReference>
<dbReference type="FunCoup" id="P0C0T0">
    <property type="interactions" value="228"/>
</dbReference>
<dbReference type="STRING" id="10116.ENSRNOP00000003412"/>
<dbReference type="GlyGen" id="P0C0T0">
    <property type="glycosylation" value="1 site"/>
</dbReference>
<dbReference type="PhosphoSitePlus" id="P0C0T0"/>
<dbReference type="PaxDb" id="10116-ENSRNOP00000003412"/>
<dbReference type="Ensembl" id="ENSRNOT00000108567.1">
    <property type="protein sequence ID" value="ENSRNOP00000085735.1"/>
    <property type="gene ID" value="ENSRNOG00000002520.6"/>
</dbReference>
<dbReference type="GeneID" id="65161"/>
<dbReference type="KEGG" id="rno:65161"/>
<dbReference type="UCSC" id="RGD:69294">
    <property type="organism name" value="rat"/>
</dbReference>
<dbReference type="AGR" id="RGD:69294"/>
<dbReference type="CTD" id="9516"/>
<dbReference type="RGD" id="69294">
    <property type="gene designation" value="Litaf"/>
</dbReference>
<dbReference type="eggNOG" id="ENOG502S2GM">
    <property type="taxonomic scope" value="Eukaryota"/>
</dbReference>
<dbReference type="GeneTree" id="ENSGT00940000155366"/>
<dbReference type="HOGENOM" id="CLU_095549_3_0_1"/>
<dbReference type="InParanoid" id="P0C0T0"/>
<dbReference type="OMA" id="VTFYDRP"/>
<dbReference type="OrthoDB" id="66470at9989"/>
<dbReference type="PhylomeDB" id="P0C0T0"/>
<dbReference type="TreeFam" id="TF313294"/>
<dbReference type="PRO" id="PR:P0C0T0"/>
<dbReference type="Proteomes" id="UP000002494">
    <property type="component" value="Chromosome 10"/>
</dbReference>
<dbReference type="Bgee" id="ENSRNOG00000002520">
    <property type="expression patterns" value="Expressed in jejunum and 19 other cell types or tissues"/>
</dbReference>
<dbReference type="ExpressionAtlas" id="P0C0T0">
    <property type="expression patterns" value="baseline and differential"/>
</dbReference>
<dbReference type="GO" id="GO:0098559">
    <property type="term" value="C:cytoplasmic side of early endosome membrane"/>
    <property type="evidence" value="ECO:0000250"/>
    <property type="project" value="UniProtKB"/>
</dbReference>
<dbReference type="GO" id="GO:0098560">
    <property type="term" value="C:cytoplasmic side of late endosome membrane"/>
    <property type="evidence" value="ECO:0000250"/>
    <property type="project" value="UniProtKB"/>
</dbReference>
<dbReference type="GO" id="GO:0098574">
    <property type="term" value="C:cytoplasmic side of lysosomal membrane"/>
    <property type="evidence" value="ECO:0000250"/>
    <property type="project" value="UniProtKB"/>
</dbReference>
<dbReference type="GO" id="GO:0009898">
    <property type="term" value="C:cytoplasmic side of plasma membrane"/>
    <property type="evidence" value="ECO:0000250"/>
    <property type="project" value="UniProtKB"/>
</dbReference>
<dbReference type="GO" id="GO:0005576">
    <property type="term" value="C:extracellular region"/>
    <property type="evidence" value="ECO:0000304"/>
    <property type="project" value="RGD"/>
</dbReference>
<dbReference type="GO" id="GO:0005794">
    <property type="term" value="C:Golgi apparatus"/>
    <property type="evidence" value="ECO:0000250"/>
    <property type="project" value="UniProtKB"/>
</dbReference>
<dbReference type="GO" id="GO:0000139">
    <property type="term" value="C:Golgi membrane"/>
    <property type="evidence" value="ECO:0007669"/>
    <property type="project" value="UniProtKB-SubCell"/>
</dbReference>
<dbReference type="GO" id="GO:0005765">
    <property type="term" value="C:lysosomal membrane"/>
    <property type="evidence" value="ECO:0000266"/>
    <property type="project" value="RGD"/>
</dbReference>
<dbReference type="GO" id="GO:0005634">
    <property type="term" value="C:nucleus"/>
    <property type="evidence" value="ECO:0000318"/>
    <property type="project" value="GO_Central"/>
</dbReference>
<dbReference type="GO" id="GO:0005886">
    <property type="term" value="C:plasma membrane"/>
    <property type="evidence" value="ECO:0000266"/>
    <property type="project" value="RGD"/>
</dbReference>
<dbReference type="GO" id="GO:0001228">
    <property type="term" value="F:DNA-binding transcription activator activity, RNA polymerase II-specific"/>
    <property type="evidence" value="ECO:0000266"/>
    <property type="project" value="RGD"/>
</dbReference>
<dbReference type="GO" id="GO:0042802">
    <property type="term" value="F:identical protein binding"/>
    <property type="evidence" value="ECO:0000266"/>
    <property type="project" value="RGD"/>
</dbReference>
<dbReference type="GO" id="GO:0000978">
    <property type="term" value="F:RNA polymerase II cis-regulatory region sequence-specific DNA binding"/>
    <property type="evidence" value="ECO:0000266"/>
    <property type="project" value="RGD"/>
</dbReference>
<dbReference type="GO" id="GO:0050699">
    <property type="term" value="F:WW domain binding"/>
    <property type="evidence" value="ECO:0000250"/>
    <property type="project" value="UniProtKB"/>
</dbReference>
<dbReference type="GO" id="GO:0008270">
    <property type="term" value="F:zinc ion binding"/>
    <property type="evidence" value="ECO:0000250"/>
    <property type="project" value="UniProtKB"/>
</dbReference>
<dbReference type="GO" id="GO:0071222">
    <property type="term" value="P:cellular response to lipopolysaccharide"/>
    <property type="evidence" value="ECO:0000266"/>
    <property type="project" value="RGD"/>
</dbReference>
<dbReference type="GO" id="GO:1901223">
    <property type="term" value="P:negative regulation of non-canonical NF-kappaB signal transduction"/>
    <property type="evidence" value="ECO:0000266"/>
    <property type="project" value="RGD"/>
</dbReference>
<dbReference type="GO" id="GO:0043123">
    <property type="term" value="P:positive regulation of canonical NF-kappaB signal transduction"/>
    <property type="evidence" value="ECO:0000250"/>
    <property type="project" value="UniProtKB"/>
</dbReference>
<dbReference type="GO" id="GO:0045944">
    <property type="term" value="P:positive regulation of transcription by RNA polymerase II"/>
    <property type="evidence" value="ECO:0000266"/>
    <property type="project" value="RGD"/>
</dbReference>
<dbReference type="GO" id="GO:0001817">
    <property type="term" value="P:regulation of cytokine production"/>
    <property type="evidence" value="ECO:0000318"/>
    <property type="project" value="GO_Central"/>
</dbReference>
<dbReference type="GO" id="GO:0010935">
    <property type="term" value="P:regulation of macrophage cytokine production"/>
    <property type="evidence" value="ECO:0000266"/>
    <property type="project" value="RGD"/>
</dbReference>
<dbReference type="GO" id="GO:0032496">
    <property type="term" value="P:response to lipopolysaccharide"/>
    <property type="evidence" value="ECO:0000266"/>
    <property type="project" value="RGD"/>
</dbReference>
<dbReference type="InterPro" id="IPR006629">
    <property type="entry name" value="LITAF"/>
</dbReference>
<dbReference type="InterPro" id="IPR037519">
    <property type="entry name" value="LITAF_fam"/>
</dbReference>
<dbReference type="PANTHER" id="PTHR23292">
    <property type="entry name" value="LIPOPOLYSACCHARIDE-INDUCED TUMOR NECROSIS FACTOR-ALPHA FACTOR"/>
    <property type="match status" value="1"/>
</dbReference>
<dbReference type="PANTHER" id="PTHR23292:SF2">
    <property type="entry name" value="LIPOPOLYSACCHARIDE-INDUCED TUMOR NECROSIS FACTOR-ALPHA FACTOR"/>
    <property type="match status" value="1"/>
</dbReference>
<dbReference type="Pfam" id="PF10601">
    <property type="entry name" value="zf-LITAF-like"/>
    <property type="match status" value="1"/>
</dbReference>
<dbReference type="SMART" id="SM00714">
    <property type="entry name" value="LITAF"/>
    <property type="match status" value="1"/>
</dbReference>
<dbReference type="PROSITE" id="PS51837">
    <property type="entry name" value="LITAF"/>
    <property type="match status" value="1"/>
</dbReference>
<evidence type="ECO:0000250" key="1">
    <source>
        <dbReference type="UniProtKB" id="Q99732"/>
    </source>
</evidence>
<evidence type="ECO:0000250" key="2">
    <source>
        <dbReference type="UniProtKB" id="Q9JLJ0"/>
    </source>
</evidence>
<evidence type="ECO:0000255" key="3">
    <source>
        <dbReference type="PROSITE-ProRule" id="PRU01181"/>
    </source>
</evidence>
<evidence type="ECO:0000269" key="4">
    <source>
    </source>
</evidence>
<evidence type="ECO:0000305" key="5"/>